<reference key="1">
    <citation type="journal article" date="2009" name="J. Bacteriol.">
        <title>Complete genome sequence of the extremophilic Bacillus cereus strain Q1 with industrial applications.</title>
        <authorList>
            <person name="Xiong Z."/>
            <person name="Jiang Y."/>
            <person name="Qi D."/>
            <person name="Lu H."/>
            <person name="Yang F."/>
            <person name="Yang J."/>
            <person name="Chen L."/>
            <person name="Sun L."/>
            <person name="Xu X."/>
            <person name="Xue Y."/>
            <person name="Zhu Y."/>
            <person name="Jin Q."/>
        </authorList>
    </citation>
    <scope>NUCLEOTIDE SEQUENCE [LARGE SCALE GENOMIC DNA]</scope>
    <source>
        <strain>Q1</strain>
    </source>
</reference>
<protein>
    <recommendedName>
        <fullName evidence="1">Enolase</fullName>
        <ecNumber evidence="1">4.2.1.11</ecNumber>
    </recommendedName>
    <alternativeName>
        <fullName evidence="1">2-phospho-D-glycerate hydro-lyase</fullName>
    </alternativeName>
    <alternativeName>
        <fullName evidence="1">2-phosphoglycerate dehydratase</fullName>
    </alternativeName>
</protein>
<feature type="chain" id="PRO_1000132984" description="Enolase">
    <location>
        <begin position="1"/>
        <end position="431"/>
    </location>
</feature>
<feature type="active site" description="Proton donor" evidence="1">
    <location>
        <position position="205"/>
    </location>
</feature>
<feature type="active site" description="Proton acceptor" evidence="1">
    <location>
        <position position="340"/>
    </location>
</feature>
<feature type="binding site" evidence="1">
    <location>
        <position position="163"/>
    </location>
    <ligand>
        <name>(2R)-2-phosphoglycerate</name>
        <dbReference type="ChEBI" id="CHEBI:58289"/>
    </ligand>
</feature>
<feature type="binding site" evidence="1">
    <location>
        <position position="242"/>
    </location>
    <ligand>
        <name>Mg(2+)</name>
        <dbReference type="ChEBI" id="CHEBI:18420"/>
    </ligand>
</feature>
<feature type="binding site" evidence="1">
    <location>
        <position position="288"/>
    </location>
    <ligand>
        <name>Mg(2+)</name>
        <dbReference type="ChEBI" id="CHEBI:18420"/>
    </ligand>
</feature>
<feature type="binding site" evidence="1">
    <location>
        <position position="315"/>
    </location>
    <ligand>
        <name>Mg(2+)</name>
        <dbReference type="ChEBI" id="CHEBI:18420"/>
    </ligand>
</feature>
<feature type="binding site" evidence="1">
    <location>
        <position position="340"/>
    </location>
    <ligand>
        <name>(2R)-2-phosphoglycerate</name>
        <dbReference type="ChEBI" id="CHEBI:58289"/>
    </ligand>
</feature>
<feature type="binding site" evidence="1">
    <location>
        <position position="369"/>
    </location>
    <ligand>
        <name>(2R)-2-phosphoglycerate</name>
        <dbReference type="ChEBI" id="CHEBI:58289"/>
    </ligand>
</feature>
<feature type="binding site" evidence="1">
    <location>
        <position position="370"/>
    </location>
    <ligand>
        <name>(2R)-2-phosphoglycerate</name>
        <dbReference type="ChEBI" id="CHEBI:58289"/>
    </ligand>
</feature>
<feature type="binding site" evidence="1">
    <location>
        <position position="391"/>
    </location>
    <ligand>
        <name>(2R)-2-phosphoglycerate</name>
        <dbReference type="ChEBI" id="CHEBI:58289"/>
    </ligand>
</feature>
<proteinExistence type="inferred from homology"/>
<sequence length="431" mass="46400">MSTIIDVYAREVLDSRGNPTVEVEVYTESGAFGRAIVPSGASTGEHEAVELRDGDKSRYLGKGVVNAVNNVNEIIAPEIVGFDVTDQAGIDRAMIELDGTPNKGKLGANAILGVSMAVAHAAADFVGLPLYRYLGGFNAKQLPTPMMNIINGGSHADNNVDFQEFMILPVGAPTFKESIRMGAEVFHALKAVLHDKGLNTAVGDEGGFAPNLGSNREALEVIIEAIEKAGYKAGENVFLGMDVASSEFYNKETGKYDLAGEGRTGLTSAEMVDFYEELCKDFPIISIEDGLDENDWDGHKLLTERLGSKVQLVGDDLFVTNTQKLAEGIEKGISNSILIKVNQIGTLTETFEAIEMAKRAGYTAVVSHRSGETEDATIADIAVATNAGQIKTGSMSRTDRIAKYNQLLRIEDELGEIAVYDGIKSFYNIKR</sequence>
<dbReference type="EC" id="4.2.1.11" evidence="1"/>
<dbReference type="EMBL" id="CP000227">
    <property type="protein sequence ID" value="ACM15341.1"/>
    <property type="molecule type" value="Genomic_DNA"/>
</dbReference>
<dbReference type="SMR" id="B9J4M4"/>
<dbReference type="KEGG" id="bcq:BCQ_4940"/>
<dbReference type="HOGENOM" id="CLU_031223_2_1_9"/>
<dbReference type="UniPathway" id="UPA00109">
    <property type="reaction ID" value="UER00187"/>
</dbReference>
<dbReference type="Proteomes" id="UP000000441">
    <property type="component" value="Chromosome"/>
</dbReference>
<dbReference type="GO" id="GO:0009986">
    <property type="term" value="C:cell surface"/>
    <property type="evidence" value="ECO:0007669"/>
    <property type="project" value="UniProtKB-SubCell"/>
</dbReference>
<dbReference type="GO" id="GO:0005576">
    <property type="term" value="C:extracellular region"/>
    <property type="evidence" value="ECO:0007669"/>
    <property type="project" value="UniProtKB-SubCell"/>
</dbReference>
<dbReference type="GO" id="GO:0000015">
    <property type="term" value="C:phosphopyruvate hydratase complex"/>
    <property type="evidence" value="ECO:0007669"/>
    <property type="project" value="InterPro"/>
</dbReference>
<dbReference type="GO" id="GO:0000287">
    <property type="term" value="F:magnesium ion binding"/>
    <property type="evidence" value="ECO:0007669"/>
    <property type="project" value="UniProtKB-UniRule"/>
</dbReference>
<dbReference type="GO" id="GO:0004634">
    <property type="term" value="F:phosphopyruvate hydratase activity"/>
    <property type="evidence" value="ECO:0007669"/>
    <property type="project" value="UniProtKB-UniRule"/>
</dbReference>
<dbReference type="GO" id="GO:0006096">
    <property type="term" value="P:glycolytic process"/>
    <property type="evidence" value="ECO:0007669"/>
    <property type="project" value="UniProtKB-UniRule"/>
</dbReference>
<dbReference type="CDD" id="cd03313">
    <property type="entry name" value="enolase"/>
    <property type="match status" value="1"/>
</dbReference>
<dbReference type="FunFam" id="3.20.20.120:FF:000001">
    <property type="entry name" value="Enolase"/>
    <property type="match status" value="1"/>
</dbReference>
<dbReference type="FunFam" id="3.30.390.10:FF:000001">
    <property type="entry name" value="Enolase"/>
    <property type="match status" value="1"/>
</dbReference>
<dbReference type="Gene3D" id="3.20.20.120">
    <property type="entry name" value="Enolase-like C-terminal domain"/>
    <property type="match status" value="1"/>
</dbReference>
<dbReference type="Gene3D" id="3.30.390.10">
    <property type="entry name" value="Enolase-like, N-terminal domain"/>
    <property type="match status" value="1"/>
</dbReference>
<dbReference type="HAMAP" id="MF_00318">
    <property type="entry name" value="Enolase"/>
    <property type="match status" value="1"/>
</dbReference>
<dbReference type="InterPro" id="IPR000941">
    <property type="entry name" value="Enolase"/>
</dbReference>
<dbReference type="InterPro" id="IPR036849">
    <property type="entry name" value="Enolase-like_C_sf"/>
</dbReference>
<dbReference type="InterPro" id="IPR029017">
    <property type="entry name" value="Enolase-like_N"/>
</dbReference>
<dbReference type="InterPro" id="IPR020810">
    <property type="entry name" value="Enolase_C"/>
</dbReference>
<dbReference type="InterPro" id="IPR020809">
    <property type="entry name" value="Enolase_CS"/>
</dbReference>
<dbReference type="InterPro" id="IPR020811">
    <property type="entry name" value="Enolase_N"/>
</dbReference>
<dbReference type="NCBIfam" id="TIGR01060">
    <property type="entry name" value="eno"/>
    <property type="match status" value="1"/>
</dbReference>
<dbReference type="PANTHER" id="PTHR11902">
    <property type="entry name" value="ENOLASE"/>
    <property type="match status" value="1"/>
</dbReference>
<dbReference type="PANTHER" id="PTHR11902:SF1">
    <property type="entry name" value="ENOLASE"/>
    <property type="match status" value="1"/>
</dbReference>
<dbReference type="Pfam" id="PF00113">
    <property type="entry name" value="Enolase_C"/>
    <property type="match status" value="1"/>
</dbReference>
<dbReference type="Pfam" id="PF03952">
    <property type="entry name" value="Enolase_N"/>
    <property type="match status" value="1"/>
</dbReference>
<dbReference type="PIRSF" id="PIRSF001400">
    <property type="entry name" value="Enolase"/>
    <property type="match status" value="1"/>
</dbReference>
<dbReference type="PRINTS" id="PR00148">
    <property type="entry name" value="ENOLASE"/>
</dbReference>
<dbReference type="SFLD" id="SFLDF00002">
    <property type="entry name" value="enolase"/>
    <property type="match status" value="1"/>
</dbReference>
<dbReference type="SFLD" id="SFLDG00178">
    <property type="entry name" value="enolase"/>
    <property type="match status" value="1"/>
</dbReference>
<dbReference type="SMART" id="SM01192">
    <property type="entry name" value="Enolase_C"/>
    <property type="match status" value="1"/>
</dbReference>
<dbReference type="SMART" id="SM01193">
    <property type="entry name" value="Enolase_N"/>
    <property type="match status" value="1"/>
</dbReference>
<dbReference type="SUPFAM" id="SSF51604">
    <property type="entry name" value="Enolase C-terminal domain-like"/>
    <property type="match status" value="1"/>
</dbReference>
<dbReference type="SUPFAM" id="SSF54826">
    <property type="entry name" value="Enolase N-terminal domain-like"/>
    <property type="match status" value="1"/>
</dbReference>
<dbReference type="PROSITE" id="PS00164">
    <property type="entry name" value="ENOLASE"/>
    <property type="match status" value="1"/>
</dbReference>
<organism>
    <name type="scientific">Bacillus cereus (strain Q1)</name>
    <dbReference type="NCBI Taxonomy" id="361100"/>
    <lineage>
        <taxon>Bacteria</taxon>
        <taxon>Bacillati</taxon>
        <taxon>Bacillota</taxon>
        <taxon>Bacilli</taxon>
        <taxon>Bacillales</taxon>
        <taxon>Bacillaceae</taxon>
        <taxon>Bacillus</taxon>
        <taxon>Bacillus cereus group</taxon>
    </lineage>
</organism>
<comment type="function">
    <text evidence="1">Catalyzes the reversible conversion of 2-phosphoglycerate (2-PG) into phosphoenolpyruvate (PEP). It is essential for the degradation of carbohydrates via glycolysis.</text>
</comment>
<comment type="catalytic activity">
    <reaction evidence="1">
        <text>(2R)-2-phosphoglycerate = phosphoenolpyruvate + H2O</text>
        <dbReference type="Rhea" id="RHEA:10164"/>
        <dbReference type="ChEBI" id="CHEBI:15377"/>
        <dbReference type="ChEBI" id="CHEBI:58289"/>
        <dbReference type="ChEBI" id="CHEBI:58702"/>
        <dbReference type="EC" id="4.2.1.11"/>
    </reaction>
</comment>
<comment type="cofactor">
    <cofactor evidence="1">
        <name>Mg(2+)</name>
        <dbReference type="ChEBI" id="CHEBI:18420"/>
    </cofactor>
    <text evidence="1">Binds a second Mg(2+) ion via substrate during catalysis.</text>
</comment>
<comment type="pathway">
    <text evidence="1">Carbohydrate degradation; glycolysis; pyruvate from D-glyceraldehyde 3-phosphate: step 4/5.</text>
</comment>
<comment type="subcellular location">
    <subcellularLocation>
        <location evidence="1">Cytoplasm</location>
    </subcellularLocation>
    <subcellularLocation>
        <location evidence="1">Secreted</location>
    </subcellularLocation>
    <subcellularLocation>
        <location evidence="1">Cell surface</location>
    </subcellularLocation>
    <text evidence="1">Fractions of enolase are present in both the cytoplasm and on the cell surface.</text>
</comment>
<comment type="similarity">
    <text evidence="1">Belongs to the enolase family.</text>
</comment>
<accession>B9J4M4</accession>
<evidence type="ECO:0000255" key="1">
    <source>
        <dbReference type="HAMAP-Rule" id="MF_00318"/>
    </source>
</evidence>
<keyword id="KW-0963">Cytoplasm</keyword>
<keyword id="KW-0324">Glycolysis</keyword>
<keyword id="KW-0456">Lyase</keyword>
<keyword id="KW-0460">Magnesium</keyword>
<keyword id="KW-0479">Metal-binding</keyword>
<keyword id="KW-0964">Secreted</keyword>
<gene>
    <name evidence="1" type="primary">eno</name>
    <name type="ordered locus">BCQ_4940</name>
</gene>
<name>ENO_BACCQ</name>